<protein>
    <recommendedName>
        <fullName evidence="1">DNA-directed RNA polymerase subunit beta</fullName>
        <shortName evidence="1">RNAP subunit beta</shortName>
        <ecNumber evidence="1">2.7.7.6</ecNumber>
    </recommendedName>
    <alternativeName>
        <fullName evidence="1">RNA polymerase subunit beta</fullName>
    </alternativeName>
    <alternativeName>
        <fullName evidence="1">Transcriptase subunit beta</fullName>
    </alternativeName>
</protein>
<accession>Q46WD4</accession>
<keyword id="KW-0240">DNA-directed RNA polymerase</keyword>
<keyword id="KW-0548">Nucleotidyltransferase</keyword>
<keyword id="KW-0804">Transcription</keyword>
<keyword id="KW-0808">Transferase</keyword>
<name>RPOB_CUPPJ</name>
<gene>
    <name evidence="1" type="primary">rpoB</name>
    <name type="ordered locus">Reut_A3189</name>
</gene>
<sequence length="1368" mass="152559">MAYSFTEKKRIRKSFAKRATVHQVPFLLATQIESYTQFLQAETPAARRKTEGLQAAFNAIFPIASHNGLARMEFVSYHLSNPPFDVKECQQRGLTFHSALRAKVRLIINDRENPGKVKEVKEQEVYMGEIPLMTSTGSFVINGTERVIVSQLHRSPGVFFEHDKGKTHSSGKLLFSARIIPYRGSWLDFEFDPKDILYFRVDRRRKMPVTILLKSIGLTPEQILAHFFVFDNFTLQSEGAQLEFVPERLRGEVARFDIADKNGRVVVEKDKRINAKHIRDLDSAGTKLISVPEDYLLGRVLAKNIIDPDTGEVIANANDELTETVLENLREAGVKQIQTLYTNDLDQGPYMSQTLRVDETADQTAARIAIYRMMRPGEPPTEEAVEALFQRLFYSEESYDLSRVGRMKVNSRLSRPSGEGSMVLQDEDILETIKILVNLRNGKGEVDDIDHLGNRRVRCVGELAENQFRAGLSRVERAVKERLGQAETENLMPHDLINSKPISSAIREFFGSSQLSQFMDQTNPLSEITHKRRVSALGPGGLTRERAGFEVRDVHPTHYGRVCPIETPEGPNIGLINSLALYARLNEYGFLETPYRKVENSKLTDQVDYLSAIEEGKYVVAQANATVDAEGNLTDELVSAREGSERETRMVTPDRVQYIDVAPSQIVSAAASLVPFLEHDDANRALMGANMQRQAVPCLRPDKPLVGTGIERTVAVDSGTAVQAMRGGVVDYVDAMRIVIRVNDDEAVAGEVGVDIYNLIKYTRSNQNTNINQRPMVKVGDIVARGDVVADGASTDLGELALGQNMLVAFMPWNGYNFEDSILISERVVAEDRYTSIHIEELSVVARDTKLGPEEITRDISNLAEAQLARLDESGITYIGAEVEAGDVLVGKVTPKGETQLTPEEKLLRAIFGEKASDVKDTSLRVPSGMSGIVIDVQVFTREGVTRDKRAQSIIDDELKRYRLDLNDQLRIVEGDAFQRLERLLIDKTVNGGPKKLAKGAKLTKEYLAEIDKYHWFDIRPADEEVAAQLEAVKEAIEQKRHEFDLAFEEKRKKLTQGDELPPGVIKMVKVYLAVKRRLQPGDKMAGRHGNKGVVSKIVPIEDMPYMADGTPADIVLNPLGVPSRMNVGQILETHLGWAARGLGQRIGDMLKASAKAQELRPLLAQIYNESGKAEDLDSLSDAEVLELATNLKKGVPFATPVFDGAHEDEIRRMLDLAYPDDIAKEKGLTASKQQVTLHDGRTGEAFERPVTLGVMHMLKLHHLVDDKMHARSTGPYSLVTQQPLGGKAQFGGQRFGEMEVWALEAYGASYVLQEMLTVKSDDVNGRTKVYENIVKGEHSIDAGMPESFNVLVKEIRSLGIDIDLDRY</sequence>
<dbReference type="EC" id="2.7.7.6" evidence="1"/>
<dbReference type="EMBL" id="CP000090">
    <property type="protein sequence ID" value="AAZ62549.1"/>
    <property type="molecule type" value="Genomic_DNA"/>
</dbReference>
<dbReference type="SMR" id="Q46WD4"/>
<dbReference type="STRING" id="264198.Reut_A3189"/>
<dbReference type="KEGG" id="reu:Reut_A3189"/>
<dbReference type="eggNOG" id="COG0085">
    <property type="taxonomic scope" value="Bacteria"/>
</dbReference>
<dbReference type="HOGENOM" id="CLU_000524_4_0_4"/>
<dbReference type="OrthoDB" id="9803954at2"/>
<dbReference type="GO" id="GO:0000428">
    <property type="term" value="C:DNA-directed RNA polymerase complex"/>
    <property type="evidence" value="ECO:0007669"/>
    <property type="project" value="UniProtKB-KW"/>
</dbReference>
<dbReference type="GO" id="GO:0003677">
    <property type="term" value="F:DNA binding"/>
    <property type="evidence" value="ECO:0007669"/>
    <property type="project" value="UniProtKB-UniRule"/>
</dbReference>
<dbReference type="GO" id="GO:0003899">
    <property type="term" value="F:DNA-directed RNA polymerase activity"/>
    <property type="evidence" value="ECO:0007669"/>
    <property type="project" value="UniProtKB-UniRule"/>
</dbReference>
<dbReference type="GO" id="GO:0032549">
    <property type="term" value="F:ribonucleoside binding"/>
    <property type="evidence" value="ECO:0007669"/>
    <property type="project" value="InterPro"/>
</dbReference>
<dbReference type="GO" id="GO:0006351">
    <property type="term" value="P:DNA-templated transcription"/>
    <property type="evidence" value="ECO:0007669"/>
    <property type="project" value="UniProtKB-UniRule"/>
</dbReference>
<dbReference type="CDD" id="cd00653">
    <property type="entry name" value="RNA_pol_B_RPB2"/>
    <property type="match status" value="1"/>
</dbReference>
<dbReference type="FunFam" id="2.40.50.100:FF:000006">
    <property type="entry name" value="DNA-directed RNA polymerase subunit beta"/>
    <property type="match status" value="1"/>
</dbReference>
<dbReference type="FunFam" id="2.40.50.150:FF:000001">
    <property type="entry name" value="DNA-directed RNA polymerase subunit beta"/>
    <property type="match status" value="1"/>
</dbReference>
<dbReference type="FunFam" id="3.90.1800.10:FF:000001">
    <property type="entry name" value="DNA-directed RNA polymerase subunit beta"/>
    <property type="match status" value="1"/>
</dbReference>
<dbReference type="Gene3D" id="2.40.50.100">
    <property type="match status" value="1"/>
</dbReference>
<dbReference type="Gene3D" id="2.40.50.150">
    <property type="match status" value="1"/>
</dbReference>
<dbReference type="Gene3D" id="3.90.1100.10">
    <property type="match status" value="2"/>
</dbReference>
<dbReference type="Gene3D" id="2.30.150.10">
    <property type="entry name" value="DNA-directed RNA polymerase, beta subunit, external 1 domain"/>
    <property type="match status" value="1"/>
</dbReference>
<dbReference type="Gene3D" id="2.40.270.10">
    <property type="entry name" value="DNA-directed RNA polymerase, subunit 2, domain 6"/>
    <property type="match status" value="1"/>
</dbReference>
<dbReference type="Gene3D" id="3.90.1800.10">
    <property type="entry name" value="RNA polymerase alpha subunit dimerisation domain"/>
    <property type="match status" value="1"/>
</dbReference>
<dbReference type="Gene3D" id="3.90.1110.10">
    <property type="entry name" value="RNA polymerase Rpb2, domain 2"/>
    <property type="match status" value="1"/>
</dbReference>
<dbReference type="HAMAP" id="MF_01321">
    <property type="entry name" value="RNApol_bact_RpoB"/>
    <property type="match status" value="1"/>
</dbReference>
<dbReference type="InterPro" id="IPR042107">
    <property type="entry name" value="DNA-dir_RNA_pol_bsu_ext_1_sf"/>
</dbReference>
<dbReference type="InterPro" id="IPR019462">
    <property type="entry name" value="DNA-dir_RNA_pol_bsu_external_1"/>
</dbReference>
<dbReference type="InterPro" id="IPR015712">
    <property type="entry name" value="DNA-dir_RNA_pol_su2"/>
</dbReference>
<dbReference type="InterPro" id="IPR007120">
    <property type="entry name" value="DNA-dir_RNAP_su2_dom"/>
</dbReference>
<dbReference type="InterPro" id="IPR037033">
    <property type="entry name" value="DNA-dir_RNAP_su2_hyb_sf"/>
</dbReference>
<dbReference type="InterPro" id="IPR010243">
    <property type="entry name" value="RNA_pol_bsu_bac"/>
</dbReference>
<dbReference type="InterPro" id="IPR007121">
    <property type="entry name" value="RNA_pol_bsu_CS"/>
</dbReference>
<dbReference type="InterPro" id="IPR007644">
    <property type="entry name" value="RNA_pol_bsu_protrusion"/>
</dbReference>
<dbReference type="InterPro" id="IPR007642">
    <property type="entry name" value="RNA_pol_Rpb2_2"/>
</dbReference>
<dbReference type="InterPro" id="IPR037034">
    <property type="entry name" value="RNA_pol_Rpb2_2_sf"/>
</dbReference>
<dbReference type="InterPro" id="IPR007645">
    <property type="entry name" value="RNA_pol_Rpb2_3"/>
</dbReference>
<dbReference type="InterPro" id="IPR007641">
    <property type="entry name" value="RNA_pol_Rpb2_7"/>
</dbReference>
<dbReference type="InterPro" id="IPR014724">
    <property type="entry name" value="RNA_pol_RPB2_OB-fold"/>
</dbReference>
<dbReference type="NCBIfam" id="NF001616">
    <property type="entry name" value="PRK00405.1"/>
    <property type="match status" value="1"/>
</dbReference>
<dbReference type="NCBIfam" id="TIGR02013">
    <property type="entry name" value="rpoB"/>
    <property type="match status" value="1"/>
</dbReference>
<dbReference type="PANTHER" id="PTHR20856">
    <property type="entry name" value="DNA-DIRECTED RNA POLYMERASE I SUBUNIT 2"/>
    <property type="match status" value="1"/>
</dbReference>
<dbReference type="Pfam" id="PF04563">
    <property type="entry name" value="RNA_pol_Rpb2_1"/>
    <property type="match status" value="1"/>
</dbReference>
<dbReference type="Pfam" id="PF04561">
    <property type="entry name" value="RNA_pol_Rpb2_2"/>
    <property type="match status" value="2"/>
</dbReference>
<dbReference type="Pfam" id="PF04565">
    <property type="entry name" value="RNA_pol_Rpb2_3"/>
    <property type="match status" value="1"/>
</dbReference>
<dbReference type="Pfam" id="PF10385">
    <property type="entry name" value="RNA_pol_Rpb2_45"/>
    <property type="match status" value="1"/>
</dbReference>
<dbReference type="Pfam" id="PF00562">
    <property type="entry name" value="RNA_pol_Rpb2_6"/>
    <property type="match status" value="1"/>
</dbReference>
<dbReference type="Pfam" id="PF04560">
    <property type="entry name" value="RNA_pol_Rpb2_7"/>
    <property type="match status" value="1"/>
</dbReference>
<dbReference type="SUPFAM" id="SSF64484">
    <property type="entry name" value="beta and beta-prime subunits of DNA dependent RNA-polymerase"/>
    <property type="match status" value="1"/>
</dbReference>
<dbReference type="PROSITE" id="PS01166">
    <property type="entry name" value="RNA_POL_BETA"/>
    <property type="match status" value="1"/>
</dbReference>
<reference key="1">
    <citation type="journal article" date="2010" name="PLoS ONE">
        <title>The complete multipartite genome sequence of Cupriavidus necator JMP134, a versatile pollutant degrader.</title>
        <authorList>
            <person name="Lykidis A."/>
            <person name="Perez-Pantoja D."/>
            <person name="Ledger T."/>
            <person name="Mavromatis K."/>
            <person name="Anderson I.J."/>
            <person name="Ivanova N.N."/>
            <person name="Hooper S.D."/>
            <person name="Lapidus A."/>
            <person name="Lucas S."/>
            <person name="Gonzalez B."/>
            <person name="Kyrpides N.C."/>
        </authorList>
    </citation>
    <scope>NUCLEOTIDE SEQUENCE [LARGE SCALE GENOMIC DNA]</scope>
    <source>
        <strain>JMP134 / LMG 1197</strain>
    </source>
</reference>
<evidence type="ECO:0000255" key="1">
    <source>
        <dbReference type="HAMAP-Rule" id="MF_01321"/>
    </source>
</evidence>
<comment type="function">
    <text evidence="1">DNA-dependent RNA polymerase catalyzes the transcription of DNA into RNA using the four ribonucleoside triphosphates as substrates.</text>
</comment>
<comment type="catalytic activity">
    <reaction evidence="1">
        <text>RNA(n) + a ribonucleoside 5'-triphosphate = RNA(n+1) + diphosphate</text>
        <dbReference type="Rhea" id="RHEA:21248"/>
        <dbReference type="Rhea" id="RHEA-COMP:14527"/>
        <dbReference type="Rhea" id="RHEA-COMP:17342"/>
        <dbReference type="ChEBI" id="CHEBI:33019"/>
        <dbReference type="ChEBI" id="CHEBI:61557"/>
        <dbReference type="ChEBI" id="CHEBI:140395"/>
        <dbReference type="EC" id="2.7.7.6"/>
    </reaction>
</comment>
<comment type="subunit">
    <text evidence="1">The RNAP catalytic core consists of 2 alpha, 1 beta, 1 beta' and 1 omega subunit. When a sigma factor is associated with the core the holoenzyme is formed, which can initiate transcription.</text>
</comment>
<comment type="similarity">
    <text evidence="1">Belongs to the RNA polymerase beta chain family.</text>
</comment>
<proteinExistence type="inferred from homology"/>
<organism>
    <name type="scientific">Cupriavidus pinatubonensis (strain JMP 134 / LMG 1197)</name>
    <name type="common">Cupriavidus necator (strain JMP 134)</name>
    <dbReference type="NCBI Taxonomy" id="264198"/>
    <lineage>
        <taxon>Bacteria</taxon>
        <taxon>Pseudomonadati</taxon>
        <taxon>Pseudomonadota</taxon>
        <taxon>Betaproteobacteria</taxon>
        <taxon>Burkholderiales</taxon>
        <taxon>Burkholderiaceae</taxon>
        <taxon>Cupriavidus</taxon>
    </lineage>
</organism>
<feature type="chain" id="PRO_0000224099" description="DNA-directed RNA polymerase subunit beta">
    <location>
        <begin position="1"/>
        <end position="1368"/>
    </location>
</feature>